<proteinExistence type="inferred from homology"/>
<evidence type="ECO:0000255" key="1">
    <source>
        <dbReference type="HAMAP-Rule" id="MF_00040"/>
    </source>
</evidence>
<evidence type="ECO:0000256" key="2">
    <source>
        <dbReference type="SAM" id="MobiDB-lite"/>
    </source>
</evidence>
<gene>
    <name evidence="1" type="primary">frr</name>
    <name type="ordered locus">Tery_3778</name>
</gene>
<keyword id="KW-0963">Cytoplasm</keyword>
<keyword id="KW-0648">Protein biosynthesis</keyword>
<comment type="function">
    <text evidence="1">Responsible for the release of ribosomes from messenger RNA at the termination of protein biosynthesis. May increase the efficiency of translation by recycling ribosomes from one round of translation to another.</text>
</comment>
<comment type="subcellular location">
    <subcellularLocation>
        <location evidence="1">Cytoplasm</location>
    </subcellularLocation>
</comment>
<comment type="similarity">
    <text evidence="1">Belongs to the RRF family.</text>
</comment>
<sequence length="182" mass="20359">MNLKEAEEKMQKAIEATKNSFNTVRTGRANASLLDRVMVEYYGSPTQLKSMANIGIPDASTITIQPYDKTSLGLIEKAINMSDVGLTPNNDGSIIRLNIPALTAERRQEMVKKTAKLAEEGKVSIRNIRRDAVDSIRKQEKNSDISKDESRDLQDKVQKKTDKYIAKIDELLAAKEKDMTTV</sequence>
<protein>
    <recommendedName>
        <fullName evidence="1">Ribosome-recycling factor</fullName>
        <shortName evidence="1">RRF</shortName>
    </recommendedName>
    <alternativeName>
        <fullName evidence="1">Ribosome-releasing factor</fullName>
    </alternativeName>
</protein>
<organism>
    <name type="scientific">Trichodesmium erythraeum (strain IMS101)</name>
    <dbReference type="NCBI Taxonomy" id="203124"/>
    <lineage>
        <taxon>Bacteria</taxon>
        <taxon>Bacillati</taxon>
        <taxon>Cyanobacteriota</taxon>
        <taxon>Cyanophyceae</taxon>
        <taxon>Oscillatoriophycideae</taxon>
        <taxon>Oscillatoriales</taxon>
        <taxon>Microcoleaceae</taxon>
        <taxon>Trichodesmium</taxon>
    </lineage>
</organism>
<feature type="chain" id="PRO_1000003306" description="Ribosome-recycling factor">
    <location>
        <begin position="1"/>
        <end position="182"/>
    </location>
</feature>
<feature type="region of interest" description="Disordered" evidence="2">
    <location>
        <begin position="136"/>
        <end position="156"/>
    </location>
</feature>
<dbReference type="EMBL" id="CP000393">
    <property type="protein sequence ID" value="ABG52825.1"/>
    <property type="molecule type" value="Genomic_DNA"/>
</dbReference>
<dbReference type="RefSeq" id="WP_011613155.1">
    <property type="nucleotide sequence ID" value="NC_008312.1"/>
</dbReference>
<dbReference type="SMR" id="Q10Y49"/>
<dbReference type="STRING" id="203124.Tery_3778"/>
<dbReference type="KEGG" id="ter:Tery_3778"/>
<dbReference type="eggNOG" id="COG0233">
    <property type="taxonomic scope" value="Bacteria"/>
</dbReference>
<dbReference type="HOGENOM" id="CLU_073981_2_0_3"/>
<dbReference type="OrthoDB" id="9804006at2"/>
<dbReference type="GO" id="GO:0005737">
    <property type="term" value="C:cytoplasm"/>
    <property type="evidence" value="ECO:0007669"/>
    <property type="project" value="UniProtKB-SubCell"/>
</dbReference>
<dbReference type="GO" id="GO:0043023">
    <property type="term" value="F:ribosomal large subunit binding"/>
    <property type="evidence" value="ECO:0007669"/>
    <property type="project" value="TreeGrafter"/>
</dbReference>
<dbReference type="GO" id="GO:0006415">
    <property type="term" value="P:translational termination"/>
    <property type="evidence" value="ECO:0007669"/>
    <property type="project" value="UniProtKB-UniRule"/>
</dbReference>
<dbReference type="CDD" id="cd00520">
    <property type="entry name" value="RRF"/>
    <property type="match status" value="1"/>
</dbReference>
<dbReference type="FunFam" id="1.10.132.20:FF:000001">
    <property type="entry name" value="Ribosome-recycling factor"/>
    <property type="match status" value="1"/>
</dbReference>
<dbReference type="FunFam" id="3.30.1360.40:FF:000001">
    <property type="entry name" value="Ribosome-recycling factor"/>
    <property type="match status" value="1"/>
</dbReference>
<dbReference type="Gene3D" id="3.30.1360.40">
    <property type="match status" value="1"/>
</dbReference>
<dbReference type="Gene3D" id="1.10.132.20">
    <property type="entry name" value="Ribosome-recycling factor"/>
    <property type="match status" value="1"/>
</dbReference>
<dbReference type="HAMAP" id="MF_00040">
    <property type="entry name" value="RRF"/>
    <property type="match status" value="1"/>
</dbReference>
<dbReference type="InterPro" id="IPR002661">
    <property type="entry name" value="Ribosome_recyc_fac"/>
</dbReference>
<dbReference type="InterPro" id="IPR023584">
    <property type="entry name" value="Ribosome_recyc_fac_dom"/>
</dbReference>
<dbReference type="InterPro" id="IPR036191">
    <property type="entry name" value="RRF_sf"/>
</dbReference>
<dbReference type="NCBIfam" id="TIGR00496">
    <property type="entry name" value="frr"/>
    <property type="match status" value="1"/>
</dbReference>
<dbReference type="PANTHER" id="PTHR20982:SF3">
    <property type="entry name" value="MITOCHONDRIAL RIBOSOME RECYCLING FACTOR PSEUDO 1"/>
    <property type="match status" value="1"/>
</dbReference>
<dbReference type="PANTHER" id="PTHR20982">
    <property type="entry name" value="RIBOSOME RECYCLING FACTOR"/>
    <property type="match status" value="1"/>
</dbReference>
<dbReference type="Pfam" id="PF01765">
    <property type="entry name" value="RRF"/>
    <property type="match status" value="1"/>
</dbReference>
<dbReference type="SUPFAM" id="SSF55194">
    <property type="entry name" value="Ribosome recycling factor, RRF"/>
    <property type="match status" value="1"/>
</dbReference>
<reference key="1">
    <citation type="journal article" date="2015" name="Proc. Natl. Acad. Sci. U.S.A.">
        <title>Trichodesmium genome maintains abundant, widespread noncoding DNA in situ, despite oligotrophic lifestyle.</title>
        <authorList>
            <person name="Walworth N."/>
            <person name="Pfreundt U."/>
            <person name="Nelson W.C."/>
            <person name="Mincer T."/>
            <person name="Heidelberg J.F."/>
            <person name="Fu F."/>
            <person name="Waterbury J.B."/>
            <person name="Glavina del Rio T."/>
            <person name="Goodwin L."/>
            <person name="Kyrpides N.C."/>
            <person name="Land M.L."/>
            <person name="Woyke T."/>
            <person name="Hutchins D.A."/>
            <person name="Hess W.R."/>
            <person name="Webb E.A."/>
        </authorList>
    </citation>
    <scope>NUCLEOTIDE SEQUENCE [LARGE SCALE GENOMIC DNA]</scope>
    <source>
        <strain>IMS101</strain>
    </source>
</reference>
<accession>Q10Y49</accession>
<name>RRF_TRIEI</name>